<accession>O67475</accession>
<protein>
    <recommendedName>
        <fullName>Ribonucleoside-diphosphate reductase subunit beta</fullName>
        <ecNumber>1.17.4.1</ecNumber>
    </recommendedName>
    <alternativeName>
        <fullName>Ribonucleotide reductase small subunit</fullName>
    </alternativeName>
    <component>
        <recommendedName>
            <fullName>Aae NrdB intein</fullName>
        </recommendedName>
        <alternativeName>
            <fullName>Aae RIR2 intein</fullName>
        </alternativeName>
    </component>
</protein>
<name>RIR2_AQUAE</name>
<sequence>MEKTEKNELVRKLIFNPQGDREASKRKIIKGNPTNIFELNEIKYSWAFDLYKLMGFTNFWIPEEIQMLEDRKQYETVLSDYEKRAYELVLSFLIALDSFQVDMLKEFGRMITAPEVEMAITAQEFQESVHAYSYQFILESVVDPVKADEIYNYWREDERLLERNKVIAELYNEFIRKPNEENFIKATIGNYILESLYFYSGFAFFYTLGRQGKMRNTVQQIKYINRDELCFIEGTEVLTKRGFVDFRELREDDLVAQYDIETGEISWTKPYAYVERDYEGSMYRLKHPKSNWEVVATEGHEFIVRNLKTGKERKEPIEKVKLHPYSAIPVAGRYTGEVEEYDLWELVSGKGITLKTRSAVKNKLTPIEKLLIVLQADGTIDSKRNGKFTGFQQLKFFFSKYRKINEFEKILNECAPYGIKWKKYERQDGIAYTVYYPNDLPIKPTKFFDEWVRLDEITEEWIREFVEELVKWDGHIPKDRNKKKVYYYSTKEKRNKDFVQALCALGGMRTVVSRERNPKAKNPVYRIWIYLEDDYINTQTMVKEEFYYKGKVYCVSVPKGNIVVRYKDSVCIAGNCHVTLFRNIINTLRKENPELFTPEIEKWIVEYFKYAVNEEIKWGQYVTQNQILGINDVLIERYIKYLGNLRITQIGFDPIYPEVTENPLKWIDEFRKINNTKTDFFQAKPQTYSKANELKW</sequence>
<proteinExistence type="evidence at protein level"/>
<evidence type="ECO:0000250" key="1"/>
<evidence type="ECO:0000255" key="2"/>
<evidence type="ECO:0000255" key="3">
    <source>
        <dbReference type="PROSITE-ProRule" id="PRU00273"/>
    </source>
</evidence>
<evidence type="ECO:0000255" key="4">
    <source>
        <dbReference type="PROSITE-ProRule" id="PRU10014"/>
    </source>
</evidence>
<evidence type="ECO:0000305" key="5"/>
<evidence type="ECO:0007829" key="6">
    <source>
        <dbReference type="PDB" id="7AIL"/>
    </source>
</evidence>
<gene>
    <name type="primary">nrdB</name>
    <name type="ordered locus">aq_1505</name>
</gene>
<organism>
    <name type="scientific">Aquifex aeolicus (strain VF5)</name>
    <dbReference type="NCBI Taxonomy" id="224324"/>
    <lineage>
        <taxon>Bacteria</taxon>
        <taxon>Pseudomonadati</taxon>
        <taxon>Aquificota</taxon>
        <taxon>Aquificia</taxon>
        <taxon>Aquificales</taxon>
        <taxon>Aquificaceae</taxon>
        <taxon>Aquifex</taxon>
    </lineage>
</organism>
<comment type="function">
    <text evidence="1">Provides the precursors necessary for DNA synthesis. Catalyzes the biosynthesis of deoxyribonucleotides from the corresponding ribonucleotides (By similarity).</text>
</comment>
<comment type="catalytic activity">
    <reaction evidence="4">
        <text>a 2'-deoxyribonucleoside 5'-diphosphate + [thioredoxin]-disulfide + H2O = a ribonucleoside 5'-diphosphate + [thioredoxin]-dithiol</text>
        <dbReference type="Rhea" id="RHEA:23252"/>
        <dbReference type="Rhea" id="RHEA-COMP:10698"/>
        <dbReference type="Rhea" id="RHEA-COMP:10700"/>
        <dbReference type="ChEBI" id="CHEBI:15377"/>
        <dbReference type="ChEBI" id="CHEBI:29950"/>
        <dbReference type="ChEBI" id="CHEBI:50058"/>
        <dbReference type="ChEBI" id="CHEBI:57930"/>
        <dbReference type="ChEBI" id="CHEBI:73316"/>
        <dbReference type="EC" id="1.17.4.1"/>
    </reaction>
</comment>
<comment type="cofactor">
    <cofactor evidence="1">
        <name>Fe cation</name>
        <dbReference type="ChEBI" id="CHEBI:24875"/>
    </cofactor>
    <text evidence="1">Binds 2 iron ions per subunit.</text>
</comment>
<comment type="subunit">
    <text evidence="1">Tetramer of two alpha and two beta subunits.</text>
</comment>
<comment type="PTM">
    <text evidence="5">This protein undergoes a protein self splicing that involves a post-translational excision of the intervening region (intein) followed by peptide ligation.</text>
</comment>
<comment type="similarity">
    <text evidence="5">Belongs to the ribonucleoside diphosphate reductase small chain family.</text>
</comment>
<reference key="1">
    <citation type="journal article" date="1998" name="Nature">
        <title>The complete genome of the hyperthermophilic bacterium Aquifex aeolicus.</title>
        <authorList>
            <person name="Deckert G."/>
            <person name="Warren P.V."/>
            <person name="Gaasterland T."/>
            <person name="Young W.G."/>
            <person name="Lenox A.L."/>
            <person name="Graham D.E."/>
            <person name="Overbeek R."/>
            <person name="Snead M.A."/>
            <person name="Keller M."/>
            <person name="Aujay M."/>
            <person name="Huber R."/>
            <person name="Feldman R.A."/>
            <person name="Short J.M."/>
            <person name="Olsen G.J."/>
            <person name="Swanson R.V."/>
        </authorList>
    </citation>
    <scope>NUCLEOTIDE SEQUENCE [LARGE SCALE GENOMIC DNA]</scope>
    <source>
        <strain>VF5</strain>
    </source>
</reference>
<dbReference type="EC" id="1.17.4.1"/>
<dbReference type="EMBL" id="AE000657">
    <property type="protein sequence ID" value="AAC07431.1"/>
    <property type="molecule type" value="Genomic_DNA"/>
</dbReference>
<dbReference type="PIR" id="A70431">
    <property type="entry name" value="A70431"/>
</dbReference>
<dbReference type="RefSeq" id="NP_214040.1">
    <property type="nucleotide sequence ID" value="NC_000918.1"/>
</dbReference>
<dbReference type="RefSeq" id="WP_010880978.1">
    <property type="nucleotide sequence ID" value="NC_000918.1"/>
</dbReference>
<dbReference type="PDB" id="7AIK">
    <property type="method" value="X-ray"/>
    <property type="resolution" value="2.10 A"/>
    <property type="chains" value="A=7-232"/>
</dbReference>
<dbReference type="PDB" id="7AIL">
    <property type="method" value="X-ray"/>
    <property type="resolution" value="1.73 A"/>
    <property type="chains" value="A=1-696"/>
</dbReference>
<dbReference type="PDBsum" id="7AIK"/>
<dbReference type="PDBsum" id="7AIL"/>
<dbReference type="SMR" id="O67475"/>
<dbReference type="STRING" id="224324.aq_1505"/>
<dbReference type="EnsemblBacteria" id="AAC07431">
    <property type="protein sequence ID" value="AAC07431"/>
    <property type="gene ID" value="aq_1505"/>
</dbReference>
<dbReference type="KEGG" id="aae:aq_1505"/>
<dbReference type="PATRIC" id="fig|224324.8.peg.1175"/>
<dbReference type="eggNOG" id="COG0208">
    <property type="taxonomic scope" value="Bacteria"/>
</dbReference>
<dbReference type="eggNOG" id="COG1372">
    <property type="taxonomic scope" value="Bacteria"/>
</dbReference>
<dbReference type="HOGENOM" id="CLU_395702_0_0_0"/>
<dbReference type="InParanoid" id="O67475"/>
<dbReference type="OrthoDB" id="9766544at2"/>
<dbReference type="Proteomes" id="UP000000798">
    <property type="component" value="Chromosome"/>
</dbReference>
<dbReference type="GO" id="GO:0004519">
    <property type="term" value="F:endonuclease activity"/>
    <property type="evidence" value="ECO:0007669"/>
    <property type="project" value="UniProtKB-KW"/>
</dbReference>
<dbReference type="GO" id="GO:0046872">
    <property type="term" value="F:metal ion binding"/>
    <property type="evidence" value="ECO:0007669"/>
    <property type="project" value="UniProtKB-KW"/>
</dbReference>
<dbReference type="GO" id="GO:0004748">
    <property type="term" value="F:ribonucleoside-diphosphate reductase activity, thioredoxin disulfide as acceptor"/>
    <property type="evidence" value="ECO:0007669"/>
    <property type="project" value="UniProtKB-EC"/>
</dbReference>
<dbReference type="GO" id="GO:0009263">
    <property type="term" value="P:deoxyribonucleotide biosynthetic process"/>
    <property type="evidence" value="ECO:0007669"/>
    <property type="project" value="UniProtKB-KW"/>
</dbReference>
<dbReference type="GO" id="GO:0016539">
    <property type="term" value="P:intein-mediated protein splicing"/>
    <property type="evidence" value="ECO:0007669"/>
    <property type="project" value="InterPro"/>
</dbReference>
<dbReference type="GO" id="GO:0006314">
    <property type="term" value="P:intron homing"/>
    <property type="evidence" value="ECO:0007669"/>
    <property type="project" value="UniProtKB-KW"/>
</dbReference>
<dbReference type="CDD" id="cd00081">
    <property type="entry name" value="Hint"/>
    <property type="match status" value="1"/>
</dbReference>
<dbReference type="CDD" id="cd01049">
    <property type="entry name" value="RNRR2"/>
    <property type="match status" value="1"/>
</dbReference>
<dbReference type="Gene3D" id="1.10.620.20">
    <property type="entry name" value="Ribonucleotide Reductase, subunit A"/>
    <property type="match status" value="2"/>
</dbReference>
<dbReference type="InterPro" id="IPR009078">
    <property type="entry name" value="Ferritin-like_SF"/>
</dbReference>
<dbReference type="InterPro" id="IPR003587">
    <property type="entry name" value="Hint_dom_N"/>
</dbReference>
<dbReference type="InterPro" id="IPR036844">
    <property type="entry name" value="Hint_dom_sf"/>
</dbReference>
<dbReference type="InterPro" id="IPR030934">
    <property type="entry name" value="Intein_C"/>
</dbReference>
<dbReference type="InterPro" id="IPR004042">
    <property type="entry name" value="Intein_endonuc_central"/>
</dbReference>
<dbReference type="InterPro" id="IPR006141">
    <property type="entry name" value="Intein_N"/>
</dbReference>
<dbReference type="InterPro" id="IPR012348">
    <property type="entry name" value="RNR-like"/>
</dbReference>
<dbReference type="InterPro" id="IPR033909">
    <property type="entry name" value="RNR_small"/>
</dbReference>
<dbReference type="InterPro" id="IPR030475">
    <property type="entry name" value="RNR_small_AS"/>
</dbReference>
<dbReference type="InterPro" id="IPR000358">
    <property type="entry name" value="RNR_small_fam"/>
</dbReference>
<dbReference type="NCBIfam" id="TIGR01443">
    <property type="entry name" value="intein_Cterm"/>
    <property type="match status" value="1"/>
</dbReference>
<dbReference type="NCBIfam" id="TIGR01445">
    <property type="entry name" value="intein_Nterm"/>
    <property type="match status" value="1"/>
</dbReference>
<dbReference type="PANTHER" id="PTHR23409">
    <property type="entry name" value="RIBONUCLEOSIDE-DIPHOSPHATE REDUCTASE SMALL CHAIN"/>
    <property type="match status" value="1"/>
</dbReference>
<dbReference type="PANTHER" id="PTHR23409:SF18">
    <property type="entry name" value="RIBONUCLEOSIDE-DIPHOSPHATE REDUCTASE SUBUNIT M2"/>
    <property type="match status" value="1"/>
</dbReference>
<dbReference type="Pfam" id="PF00268">
    <property type="entry name" value="Ribonuc_red_sm"/>
    <property type="match status" value="2"/>
</dbReference>
<dbReference type="SMART" id="SM00306">
    <property type="entry name" value="HintN"/>
    <property type="match status" value="1"/>
</dbReference>
<dbReference type="SUPFAM" id="SSF47240">
    <property type="entry name" value="Ferritin-like"/>
    <property type="match status" value="2"/>
</dbReference>
<dbReference type="SUPFAM" id="SSF51294">
    <property type="entry name" value="Hedgehog/intein (Hint) domain"/>
    <property type="match status" value="1"/>
</dbReference>
<dbReference type="PROSITE" id="PS50818">
    <property type="entry name" value="INTEIN_C_TER"/>
    <property type="match status" value="1"/>
</dbReference>
<dbReference type="PROSITE" id="PS50819">
    <property type="entry name" value="INTEIN_ENDONUCLEASE"/>
    <property type="match status" value="1"/>
</dbReference>
<dbReference type="PROSITE" id="PS50817">
    <property type="entry name" value="INTEIN_N_TER"/>
    <property type="match status" value="1"/>
</dbReference>
<dbReference type="PROSITE" id="PS00368">
    <property type="entry name" value="RIBORED_SMALL"/>
    <property type="match status" value="1"/>
</dbReference>
<keyword id="KW-0002">3D-structure</keyword>
<keyword id="KW-0068">Autocatalytic cleavage</keyword>
<keyword id="KW-0215">Deoxyribonucleotide synthesis</keyword>
<keyword id="KW-0255">Endonuclease</keyword>
<keyword id="KW-0378">Hydrolase</keyword>
<keyword id="KW-0404">Intron homing</keyword>
<keyword id="KW-0408">Iron</keyword>
<keyword id="KW-0479">Metal-binding</keyword>
<keyword id="KW-0540">Nuclease</keyword>
<keyword id="KW-0560">Oxidoreductase</keyword>
<keyword id="KW-0651">Protein splicing</keyword>
<keyword id="KW-1185">Reference proteome</keyword>
<feature type="chain" id="PRO_0000030598" description="Ribonucleoside-diphosphate reductase subunit beta, 1st part" evidence="2">
    <location>
        <begin position="1"/>
        <end position="229"/>
    </location>
</feature>
<feature type="chain" id="PRO_0000030599" description="Aae NrdB intein" evidence="2">
    <location>
        <begin position="230"/>
        <end position="575"/>
    </location>
</feature>
<feature type="chain" id="PRO_0000030600" description="Ribonucleoside-diphosphate reductase subunit beta, 2nd part" evidence="2">
    <location>
        <begin position="576"/>
        <end position="696"/>
    </location>
</feature>
<feature type="domain" description="DOD-type homing endonuclease" evidence="3">
    <location>
        <begin position="377"/>
        <end position="507"/>
    </location>
</feature>
<feature type="active site" evidence="4">
    <location>
        <position position="134"/>
    </location>
</feature>
<feature type="binding site" evidence="4">
    <location>
        <position position="97"/>
    </location>
    <ligand>
        <name>Fe cation</name>
        <dbReference type="ChEBI" id="CHEBI:24875"/>
        <label>1</label>
    </ligand>
</feature>
<feature type="binding site" evidence="4">
    <location>
        <position position="127"/>
    </location>
    <ligand>
        <name>Fe cation</name>
        <dbReference type="ChEBI" id="CHEBI:24875"/>
        <label>1</label>
    </ligand>
</feature>
<feature type="binding site" evidence="1">
    <location>
        <position position="127"/>
    </location>
    <ligand>
        <name>Fe cation</name>
        <dbReference type="ChEBI" id="CHEBI:24875"/>
        <label>2</label>
    </ligand>
</feature>
<feature type="binding site" evidence="4">
    <location>
        <position position="130"/>
    </location>
    <ligand>
        <name>Fe cation</name>
        <dbReference type="ChEBI" id="CHEBI:24875"/>
        <label>1</label>
    </ligand>
</feature>
<feature type="binding site" evidence="1">
    <location>
        <position position="194"/>
    </location>
    <ligand>
        <name>Fe cation</name>
        <dbReference type="ChEBI" id="CHEBI:24875"/>
        <label>2</label>
    </ligand>
</feature>
<feature type="binding site" evidence="1">
    <location>
        <position position="228"/>
    </location>
    <ligand>
        <name>Fe cation</name>
        <dbReference type="ChEBI" id="CHEBI:24875"/>
        <label>2</label>
    </ligand>
</feature>
<feature type="binding site" evidence="1">
    <location>
        <position position="577"/>
    </location>
    <ligand>
        <name>Fe cation</name>
        <dbReference type="ChEBI" id="CHEBI:24875"/>
        <label>2</label>
    </ligand>
</feature>
<feature type="helix" evidence="6">
    <location>
        <begin position="23"/>
        <end position="25"/>
    </location>
</feature>
<feature type="strand" evidence="6">
    <location>
        <begin position="28"/>
        <end position="30"/>
    </location>
</feature>
<feature type="helix" evidence="6">
    <location>
        <begin position="45"/>
        <end position="55"/>
    </location>
</feature>
<feature type="turn" evidence="6">
    <location>
        <begin position="56"/>
        <end position="58"/>
    </location>
</feature>
<feature type="helix" evidence="6">
    <location>
        <begin position="62"/>
        <end position="64"/>
    </location>
</feature>
<feature type="helix" evidence="6">
    <location>
        <begin position="70"/>
        <end position="76"/>
    </location>
</feature>
<feature type="helix" evidence="6">
    <location>
        <begin position="80"/>
        <end position="110"/>
    </location>
</feature>
<feature type="helix" evidence="6">
    <location>
        <begin position="114"/>
        <end position="141"/>
    </location>
</feature>
<feature type="helix" evidence="6">
    <location>
        <begin position="144"/>
        <end position="151"/>
    </location>
</feature>
<feature type="helix" evidence="6">
    <location>
        <begin position="153"/>
        <end position="155"/>
    </location>
</feature>
<feature type="helix" evidence="6">
    <location>
        <begin position="158"/>
        <end position="176"/>
    </location>
</feature>
<feature type="helix" evidence="6">
    <location>
        <begin position="180"/>
        <end position="196"/>
    </location>
</feature>
<feature type="helix" evidence="6">
    <location>
        <begin position="199"/>
        <end position="210"/>
    </location>
</feature>
<feature type="helix" evidence="6">
    <location>
        <begin position="215"/>
        <end position="230"/>
    </location>
</feature>
<feature type="helix" evidence="6">
    <location>
        <begin position="577"/>
        <end position="591"/>
    </location>
</feature>
<feature type="helix" evidence="6">
    <location>
        <begin position="593"/>
        <end position="595"/>
    </location>
</feature>
<feature type="helix" evidence="6">
    <location>
        <begin position="598"/>
        <end position="623"/>
    </location>
</feature>
<feature type="helix" evidence="6">
    <location>
        <begin position="632"/>
        <end position="648"/>
    </location>
</feature>
<feature type="turn" evidence="6">
    <location>
        <begin position="649"/>
        <end position="651"/>
    </location>
</feature>
<feature type="turn" evidence="6">
    <location>
        <begin position="663"/>
        <end position="666"/>
    </location>
</feature>
<feature type="helix" evidence="6">
    <location>
        <begin position="667"/>
        <end position="670"/>
    </location>
</feature>